<keyword id="KW-0067">ATP-binding</keyword>
<keyword id="KW-0436">Ligase</keyword>
<keyword id="KW-0479">Metal-binding</keyword>
<keyword id="KW-0547">Nucleotide-binding</keyword>
<keyword id="KW-0671">Queuosine biosynthesis</keyword>
<keyword id="KW-1185">Reference proteome</keyword>
<keyword id="KW-0862">Zinc</keyword>
<sequence length="231" mass="25480">MKRAVVVFSGGQDSTTCLVQALQQYDEVHCVTFDYGQRHRAEIDVARELALKLGARAHKVLDVTLLNELAVSSLTRDSIPVPDYEPEADGIPNTFVPGRNILFLTLAAIYAYQVKAEAVITGVCETDFSGYPDCRDEFVKALNHAVSLGMAKDIRFETPLMWIDKAETWALADYYGKLDLVRNETLTCYNGIKGDGCGHCAACNLRANGLNHYLADKPTVMAAMKQKTGLR</sequence>
<organism>
    <name type="scientific">Shigella sonnei (strain Ss046)</name>
    <dbReference type="NCBI Taxonomy" id="300269"/>
    <lineage>
        <taxon>Bacteria</taxon>
        <taxon>Pseudomonadati</taxon>
        <taxon>Pseudomonadota</taxon>
        <taxon>Gammaproteobacteria</taxon>
        <taxon>Enterobacterales</taxon>
        <taxon>Enterobacteriaceae</taxon>
        <taxon>Shigella</taxon>
    </lineage>
</organism>
<feature type="chain" id="PRO_0000246925" description="7-cyano-7-deazaguanine synthase">
    <location>
        <begin position="1"/>
        <end position="231"/>
    </location>
</feature>
<feature type="binding site" evidence="1">
    <location>
        <begin position="8"/>
        <end position="18"/>
    </location>
    <ligand>
        <name>ATP</name>
        <dbReference type="ChEBI" id="CHEBI:30616"/>
    </ligand>
</feature>
<feature type="binding site" evidence="1">
    <location>
        <position position="188"/>
    </location>
    <ligand>
        <name>Zn(2+)</name>
        <dbReference type="ChEBI" id="CHEBI:29105"/>
    </ligand>
</feature>
<feature type="binding site" evidence="1">
    <location>
        <position position="197"/>
    </location>
    <ligand>
        <name>Zn(2+)</name>
        <dbReference type="ChEBI" id="CHEBI:29105"/>
    </ligand>
</feature>
<feature type="binding site" evidence="1">
    <location>
        <position position="200"/>
    </location>
    <ligand>
        <name>Zn(2+)</name>
        <dbReference type="ChEBI" id="CHEBI:29105"/>
    </ligand>
</feature>
<feature type="binding site" evidence="1">
    <location>
        <position position="203"/>
    </location>
    <ligand>
        <name>Zn(2+)</name>
        <dbReference type="ChEBI" id="CHEBI:29105"/>
    </ligand>
</feature>
<dbReference type="EC" id="6.3.4.20" evidence="1"/>
<dbReference type="EMBL" id="CP000038">
    <property type="protein sequence ID" value="AAZ87208.1"/>
    <property type="molecule type" value="Genomic_DNA"/>
</dbReference>
<dbReference type="RefSeq" id="WP_000817229.1">
    <property type="nucleotide sequence ID" value="NC_007384.1"/>
</dbReference>
<dbReference type="SMR" id="Q3Z4V4"/>
<dbReference type="GeneID" id="93777006"/>
<dbReference type="KEGG" id="ssn:SSON_0432"/>
<dbReference type="HOGENOM" id="CLU_081854_0_0_6"/>
<dbReference type="UniPathway" id="UPA00391"/>
<dbReference type="Proteomes" id="UP000002529">
    <property type="component" value="Chromosome"/>
</dbReference>
<dbReference type="GO" id="GO:0005524">
    <property type="term" value="F:ATP binding"/>
    <property type="evidence" value="ECO:0007669"/>
    <property type="project" value="UniProtKB-UniRule"/>
</dbReference>
<dbReference type="GO" id="GO:0016879">
    <property type="term" value="F:ligase activity, forming carbon-nitrogen bonds"/>
    <property type="evidence" value="ECO:0007669"/>
    <property type="project" value="UniProtKB-UniRule"/>
</dbReference>
<dbReference type="GO" id="GO:0008270">
    <property type="term" value="F:zinc ion binding"/>
    <property type="evidence" value="ECO:0007669"/>
    <property type="project" value="UniProtKB-UniRule"/>
</dbReference>
<dbReference type="GO" id="GO:0008616">
    <property type="term" value="P:queuosine biosynthetic process"/>
    <property type="evidence" value="ECO:0007669"/>
    <property type="project" value="UniProtKB-UniRule"/>
</dbReference>
<dbReference type="CDD" id="cd01995">
    <property type="entry name" value="QueC-like"/>
    <property type="match status" value="1"/>
</dbReference>
<dbReference type="FunFam" id="3.40.50.620:FF:000017">
    <property type="entry name" value="7-cyano-7-deazaguanine synthase"/>
    <property type="match status" value="1"/>
</dbReference>
<dbReference type="Gene3D" id="3.40.50.620">
    <property type="entry name" value="HUPs"/>
    <property type="match status" value="1"/>
</dbReference>
<dbReference type="HAMAP" id="MF_01633">
    <property type="entry name" value="QueC"/>
    <property type="match status" value="1"/>
</dbReference>
<dbReference type="InterPro" id="IPR018317">
    <property type="entry name" value="QueC"/>
</dbReference>
<dbReference type="InterPro" id="IPR014729">
    <property type="entry name" value="Rossmann-like_a/b/a_fold"/>
</dbReference>
<dbReference type="NCBIfam" id="TIGR00364">
    <property type="entry name" value="7-cyano-7-deazaguanine synthase QueC"/>
    <property type="match status" value="1"/>
</dbReference>
<dbReference type="NCBIfam" id="NF008317">
    <property type="entry name" value="PRK11106.1"/>
    <property type="match status" value="1"/>
</dbReference>
<dbReference type="PANTHER" id="PTHR42914">
    <property type="entry name" value="7-CYANO-7-DEAZAGUANINE SYNTHASE"/>
    <property type="match status" value="1"/>
</dbReference>
<dbReference type="PANTHER" id="PTHR42914:SF1">
    <property type="entry name" value="7-CYANO-7-DEAZAGUANINE SYNTHASE"/>
    <property type="match status" value="1"/>
</dbReference>
<dbReference type="Pfam" id="PF06508">
    <property type="entry name" value="QueC"/>
    <property type="match status" value="1"/>
</dbReference>
<dbReference type="PIRSF" id="PIRSF006293">
    <property type="entry name" value="ExsB"/>
    <property type="match status" value="1"/>
</dbReference>
<dbReference type="SUPFAM" id="SSF52402">
    <property type="entry name" value="Adenine nucleotide alpha hydrolases-like"/>
    <property type="match status" value="1"/>
</dbReference>
<evidence type="ECO:0000255" key="1">
    <source>
        <dbReference type="HAMAP-Rule" id="MF_01633"/>
    </source>
</evidence>
<accession>Q3Z4V4</accession>
<gene>
    <name evidence="1" type="primary">queC</name>
    <name type="ordered locus">SSON_0432</name>
</gene>
<proteinExistence type="inferred from homology"/>
<reference key="1">
    <citation type="journal article" date="2005" name="Nucleic Acids Res.">
        <title>Genome dynamics and diversity of Shigella species, the etiologic agents of bacillary dysentery.</title>
        <authorList>
            <person name="Yang F."/>
            <person name="Yang J."/>
            <person name="Zhang X."/>
            <person name="Chen L."/>
            <person name="Jiang Y."/>
            <person name="Yan Y."/>
            <person name="Tang X."/>
            <person name="Wang J."/>
            <person name="Xiong Z."/>
            <person name="Dong J."/>
            <person name="Xue Y."/>
            <person name="Zhu Y."/>
            <person name="Xu X."/>
            <person name="Sun L."/>
            <person name="Chen S."/>
            <person name="Nie H."/>
            <person name="Peng J."/>
            <person name="Xu J."/>
            <person name="Wang Y."/>
            <person name="Yuan Z."/>
            <person name="Wen Y."/>
            <person name="Yao Z."/>
            <person name="Shen Y."/>
            <person name="Qiang B."/>
            <person name="Hou Y."/>
            <person name="Yu J."/>
            <person name="Jin Q."/>
        </authorList>
    </citation>
    <scope>NUCLEOTIDE SEQUENCE [LARGE SCALE GENOMIC DNA]</scope>
    <source>
        <strain>Ss046</strain>
    </source>
</reference>
<comment type="function">
    <text evidence="1">Catalyzes the ATP-dependent conversion of 7-carboxy-7-deazaguanine (CDG) to 7-cyano-7-deazaguanine (preQ(0)).</text>
</comment>
<comment type="catalytic activity">
    <reaction evidence="1">
        <text>7-carboxy-7-deazaguanine + NH4(+) + ATP = 7-cyano-7-deazaguanine + ADP + phosphate + H2O + H(+)</text>
        <dbReference type="Rhea" id="RHEA:27982"/>
        <dbReference type="ChEBI" id="CHEBI:15377"/>
        <dbReference type="ChEBI" id="CHEBI:15378"/>
        <dbReference type="ChEBI" id="CHEBI:28938"/>
        <dbReference type="ChEBI" id="CHEBI:30616"/>
        <dbReference type="ChEBI" id="CHEBI:43474"/>
        <dbReference type="ChEBI" id="CHEBI:45075"/>
        <dbReference type="ChEBI" id="CHEBI:61036"/>
        <dbReference type="ChEBI" id="CHEBI:456216"/>
        <dbReference type="EC" id="6.3.4.20"/>
    </reaction>
</comment>
<comment type="cofactor">
    <cofactor evidence="1">
        <name>Zn(2+)</name>
        <dbReference type="ChEBI" id="CHEBI:29105"/>
    </cofactor>
    <text evidence="1">Binds 1 zinc ion per subunit.</text>
</comment>
<comment type="pathway">
    <text evidence="1">Purine metabolism; 7-cyano-7-deazaguanine biosynthesis.</text>
</comment>
<comment type="similarity">
    <text evidence="1">Belongs to the QueC family.</text>
</comment>
<name>QUEC_SHISS</name>
<protein>
    <recommendedName>
        <fullName evidence="1">7-cyano-7-deazaguanine synthase</fullName>
        <ecNumber evidence="1">6.3.4.20</ecNumber>
    </recommendedName>
    <alternativeName>
        <fullName evidence="1">7-cyano-7-carbaguanine synthase</fullName>
    </alternativeName>
    <alternativeName>
        <fullName evidence="1">PreQ(0) synthase</fullName>
    </alternativeName>
    <alternativeName>
        <fullName evidence="1">Queuosine biosynthesis protein QueC</fullName>
    </alternativeName>
</protein>